<organism>
    <name type="scientific">Prochlorococcus marinus (strain MIT 9312)</name>
    <dbReference type="NCBI Taxonomy" id="74546"/>
    <lineage>
        <taxon>Bacteria</taxon>
        <taxon>Bacillati</taxon>
        <taxon>Cyanobacteriota</taxon>
        <taxon>Cyanophyceae</taxon>
        <taxon>Synechococcales</taxon>
        <taxon>Prochlorococcaceae</taxon>
        <taxon>Prochlorococcus</taxon>
    </lineage>
</organism>
<gene>
    <name evidence="1" type="primary">queF</name>
    <name type="ordered locus">PMT9312_1554</name>
</gene>
<keyword id="KW-0963">Cytoplasm</keyword>
<keyword id="KW-0521">NADP</keyword>
<keyword id="KW-0560">Oxidoreductase</keyword>
<keyword id="KW-0671">Queuosine biosynthesis</keyword>
<protein>
    <recommendedName>
        <fullName evidence="1">NADPH-dependent 7-cyano-7-deazaguanine reductase</fullName>
        <ecNumber evidence="1">1.7.1.13</ecNumber>
    </recommendedName>
    <alternativeName>
        <fullName evidence="1">7-cyano-7-carbaguanine reductase</fullName>
    </alternativeName>
    <alternativeName>
        <fullName evidence="1">NADPH-dependent nitrile oxidoreductase</fullName>
    </alternativeName>
    <alternativeName>
        <fullName evidence="1">PreQ(0) reductase</fullName>
    </alternativeName>
</protein>
<name>QUEF_PROM9</name>
<proteinExistence type="inferred from homology"/>
<evidence type="ECO:0000255" key="1">
    <source>
        <dbReference type="HAMAP-Rule" id="MF_00818"/>
    </source>
</evidence>
<sequence>MSTAKLDDSTQRPLYGERIIEESKIICFENPNKKRIYEISIQLPEFTCKCPFSGYPDFAKLNIIYQPNLSVYELKSLKLYINNFRDIKISHEEVVNRIMDDLVNEGSPHWIHLNAAFNPRGNVSMQLDIFSGQKRN</sequence>
<accession>Q318T1</accession>
<feature type="chain" id="PRO_0000247688" description="NADPH-dependent 7-cyano-7-deazaguanine reductase">
    <location>
        <begin position="1"/>
        <end position="136"/>
    </location>
</feature>
<feature type="active site" description="Thioimide intermediate" evidence="1">
    <location>
        <position position="50"/>
    </location>
</feature>
<feature type="active site" description="Proton donor" evidence="1">
    <location>
        <position position="57"/>
    </location>
</feature>
<feature type="binding site" evidence="1">
    <location>
        <begin position="72"/>
        <end position="74"/>
    </location>
    <ligand>
        <name>substrate</name>
    </ligand>
</feature>
<feature type="binding site" evidence="1">
    <location>
        <begin position="91"/>
        <end position="92"/>
    </location>
    <ligand>
        <name>substrate</name>
    </ligand>
</feature>
<comment type="function">
    <text evidence="1">Catalyzes the NADPH-dependent reduction of 7-cyano-7-deazaguanine (preQ0) to 7-aminomethyl-7-deazaguanine (preQ1).</text>
</comment>
<comment type="catalytic activity">
    <reaction evidence="1">
        <text>7-aminomethyl-7-carbaguanine + 2 NADP(+) = 7-cyano-7-deazaguanine + 2 NADPH + 3 H(+)</text>
        <dbReference type="Rhea" id="RHEA:13409"/>
        <dbReference type="ChEBI" id="CHEBI:15378"/>
        <dbReference type="ChEBI" id="CHEBI:45075"/>
        <dbReference type="ChEBI" id="CHEBI:57783"/>
        <dbReference type="ChEBI" id="CHEBI:58349"/>
        <dbReference type="ChEBI" id="CHEBI:58703"/>
        <dbReference type="EC" id="1.7.1.13"/>
    </reaction>
</comment>
<comment type="pathway">
    <text evidence="1">tRNA modification; tRNA-queuosine biosynthesis.</text>
</comment>
<comment type="subcellular location">
    <subcellularLocation>
        <location evidence="1">Cytoplasm</location>
    </subcellularLocation>
</comment>
<comment type="similarity">
    <text evidence="1">Belongs to the GTP cyclohydrolase I family. QueF type 1 subfamily.</text>
</comment>
<reference key="1">
    <citation type="journal article" date="2006" name="Science">
        <title>Genomic islands and the ecology and evolution of Prochlorococcus.</title>
        <authorList>
            <person name="Coleman M.L."/>
            <person name="Sullivan M.B."/>
            <person name="Martiny A.C."/>
            <person name="Steglich C."/>
            <person name="Barry K."/>
            <person name="Delong E.F."/>
            <person name="Chisholm S.W."/>
        </authorList>
    </citation>
    <scope>NUCLEOTIDE SEQUENCE [LARGE SCALE GENOMIC DNA]</scope>
    <source>
        <strain>MIT 9312</strain>
    </source>
</reference>
<dbReference type="EC" id="1.7.1.13" evidence="1"/>
<dbReference type="EMBL" id="CP000111">
    <property type="protein sequence ID" value="ABB50614.1"/>
    <property type="molecule type" value="Genomic_DNA"/>
</dbReference>
<dbReference type="RefSeq" id="WP_011377096.1">
    <property type="nucleotide sequence ID" value="NC_007577.1"/>
</dbReference>
<dbReference type="SMR" id="Q318T1"/>
<dbReference type="STRING" id="74546.PMT9312_1554"/>
<dbReference type="KEGG" id="pmi:PMT9312_1554"/>
<dbReference type="eggNOG" id="COG0780">
    <property type="taxonomic scope" value="Bacteria"/>
</dbReference>
<dbReference type="HOGENOM" id="CLU_102489_1_1_3"/>
<dbReference type="OrthoDB" id="9795077at2"/>
<dbReference type="UniPathway" id="UPA00392"/>
<dbReference type="Proteomes" id="UP000002715">
    <property type="component" value="Chromosome"/>
</dbReference>
<dbReference type="GO" id="GO:0005737">
    <property type="term" value="C:cytoplasm"/>
    <property type="evidence" value="ECO:0007669"/>
    <property type="project" value="UniProtKB-SubCell"/>
</dbReference>
<dbReference type="GO" id="GO:0033739">
    <property type="term" value="F:preQ1 synthase activity"/>
    <property type="evidence" value="ECO:0007669"/>
    <property type="project" value="UniProtKB-UniRule"/>
</dbReference>
<dbReference type="GO" id="GO:0008616">
    <property type="term" value="P:queuosine biosynthetic process"/>
    <property type="evidence" value="ECO:0007669"/>
    <property type="project" value="UniProtKB-UniRule"/>
</dbReference>
<dbReference type="GO" id="GO:0006400">
    <property type="term" value="P:tRNA modification"/>
    <property type="evidence" value="ECO:0007669"/>
    <property type="project" value="UniProtKB-UniRule"/>
</dbReference>
<dbReference type="Gene3D" id="3.30.1130.10">
    <property type="match status" value="1"/>
</dbReference>
<dbReference type="HAMAP" id="MF_00818">
    <property type="entry name" value="QueF_type1"/>
    <property type="match status" value="1"/>
</dbReference>
<dbReference type="InterPro" id="IPR043133">
    <property type="entry name" value="GTP-CH-I_C/QueF"/>
</dbReference>
<dbReference type="InterPro" id="IPR050084">
    <property type="entry name" value="NADPH_dep_7-cyano-7-deazaG_red"/>
</dbReference>
<dbReference type="InterPro" id="IPR029500">
    <property type="entry name" value="QueF"/>
</dbReference>
<dbReference type="InterPro" id="IPR016856">
    <property type="entry name" value="QueF_type1"/>
</dbReference>
<dbReference type="NCBIfam" id="TIGR03139">
    <property type="entry name" value="QueF-II"/>
    <property type="match status" value="1"/>
</dbReference>
<dbReference type="PANTHER" id="PTHR34354">
    <property type="entry name" value="NADPH-DEPENDENT 7-CYANO-7-DEAZAGUANINE REDUCTASE"/>
    <property type="match status" value="1"/>
</dbReference>
<dbReference type="PANTHER" id="PTHR34354:SF1">
    <property type="entry name" value="NADPH-DEPENDENT 7-CYANO-7-DEAZAGUANINE REDUCTASE"/>
    <property type="match status" value="1"/>
</dbReference>
<dbReference type="Pfam" id="PF14489">
    <property type="entry name" value="QueF"/>
    <property type="match status" value="1"/>
</dbReference>
<dbReference type="PIRSF" id="PIRSF027377">
    <property type="entry name" value="Nitrile_oxidored_QueF"/>
    <property type="match status" value="1"/>
</dbReference>
<dbReference type="SUPFAM" id="SSF55620">
    <property type="entry name" value="Tetrahydrobiopterin biosynthesis enzymes-like"/>
    <property type="match status" value="1"/>
</dbReference>